<name>LITL_PHYSA</name>
<feature type="signal peptide" evidence="1">
    <location>
        <begin position="1"/>
        <end position="30"/>
    </location>
</feature>
<feature type="propeptide" id="PRO_0000003014" evidence="2">
    <location>
        <begin position="31"/>
        <end position="48"/>
    </location>
</feature>
<feature type="peptide" id="PRO_0000003015" description="[Leu8]-phyllolitorin">
    <location>
        <begin position="49"/>
        <end position="57"/>
    </location>
</feature>
<feature type="propeptide" id="PRO_0000003016">
    <location>
        <begin position="61"/>
        <end position="90"/>
    </location>
</feature>
<feature type="modified residue" description="Pyrrolidone carboxylic acid" evidence="2">
    <location>
        <position position="49"/>
    </location>
</feature>
<feature type="modified residue" description="Methionine amide" evidence="2">
    <location>
        <position position="57"/>
    </location>
</feature>
<comment type="subcellular location">
    <subcellularLocation>
        <location>Secreted</location>
    </subcellularLocation>
</comment>
<comment type="tissue specificity">
    <text>Expressed by the skin glands.</text>
</comment>
<comment type="similarity">
    <text evidence="3">Belongs to the bombesin/neuromedin-B/ranatensin family.</text>
</comment>
<reference key="1">
    <citation type="journal article" date="1994" name="Mol. Endocrinol.">
        <title>Cloning of complementary DNAs encoding the amphibian bombesin-like peptides Phe8 and Leu8 phyllolitorin from Phyllomedusa sauvagei: potential role of U to C RNA editing in generating neuropeptide diversity.</title>
        <authorList>
            <person name="Nagalla S.R."/>
            <person name="Barry B.J."/>
            <person name="Spindel E.R."/>
        </authorList>
    </citation>
    <scope>NUCLEOTIDE SEQUENCE [MRNA]</scope>
</reference>
<reference key="2">
    <citation type="journal article" date="1985" name="Peptides 6 Suppl.">
        <title>Phyllomedusa skin: a huge factory and store-house of a variety of active peptides.</title>
        <authorList>
            <person name="Erspamer V."/>
            <person name="Melchiorri P."/>
            <person name="Falconieri-Erspamer G."/>
            <person name="Montecucchi P.C."/>
            <person name="de Castiglione R."/>
        </authorList>
    </citation>
    <scope>PROTEIN SEQUENCE OF 49-57</scope>
    <scope>PYROGLUTAMATE FORMATION AT GLN-49</scope>
    <scope>AMIDATION AT MET-57</scope>
    <source>
        <tissue>Skin secretion</tissue>
    </source>
</reference>
<keyword id="KW-0027">Amidation</keyword>
<keyword id="KW-0878">Amphibian defense peptide</keyword>
<keyword id="KW-0165">Cleavage on pair of basic residues</keyword>
<keyword id="KW-0903">Direct protein sequencing</keyword>
<keyword id="KW-0873">Pyrrolidone carboxylic acid</keyword>
<keyword id="KW-0964">Secreted</keyword>
<keyword id="KW-0732">Signal</keyword>
<accession>P08948</accession>
<organism>
    <name type="scientific">Phyllomedusa sauvagei</name>
    <name type="common">Sauvage's leaf frog</name>
    <dbReference type="NCBI Taxonomy" id="8395"/>
    <lineage>
        <taxon>Eukaryota</taxon>
        <taxon>Metazoa</taxon>
        <taxon>Chordata</taxon>
        <taxon>Craniata</taxon>
        <taxon>Vertebrata</taxon>
        <taxon>Euteleostomi</taxon>
        <taxon>Amphibia</taxon>
        <taxon>Batrachia</taxon>
        <taxon>Anura</taxon>
        <taxon>Neobatrachia</taxon>
        <taxon>Hyloidea</taxon>
        <taxon>Hylidae</taxon>
        <taxon>Phyllomedusinae</taxon>
        <taxon>Phyllomedusa</taxon>
    </lineage>
</organism>
<evidence type="ECO:0000255" key="1"/>
<evidence type="ECO:0000269" key="2">
    <source>
    </source>
</evidence>
<evidence type="ECO:0000305" key="3"/>
<proteinExistence type="evidence at protein level"/>
<protein>
    <recommendedName>
        <fullName>[Leu8]-phyllolitorin</fullName>
    </recommendedName>
</protein>
<sequence length="90" mass="10113">MSAVPFTRVLLISGFLAHLLLSTFVTLTVCKEVTEESDDLSKRNVLQRQLWAVGSLMGKKSLENTNRRSDEDMEISALFRGSPLKVKRSD</sequence>
<dbReference type="EMBL" id="S77208">
    <property type="protein sequence ID" value="AAB32787.1"/>
    <property type="molecule type" value="mRNA"/>
</dbReference>
<dbReference type="PIR" id="A57058">
    <property type="entry name" value="A57058"/>
</dbReference>
<dbReference type="GO" id="GO:0005576">
    <property type="term" value="C:extracellular region"/>
    <property type="evidence" value="ECO:0007669"/>
    <property type="project" value="UniProtKB-SubCell"/>
</dbReference>
<dbReference type="GO" id="GO:0006952">
    <property type="term" value="P:defense response"/>
    <property type="evidence" value="ECO:0007669"/>
    <property type="project" value="UniProtKB-KW"/>
</dbReference>
<dbReference type="GO" id="GO:0007218">
    <property type="term" value="P:neuropeptide signaling pathway"/>
    <property type="evidence" value="ECO:0007669"/>
    <property type="project" value="InterPro"/>
</dbReference>
<dbReference type="InterPro" id="IPR000874">
    <property type="entry name" value="Bombesin"/>
</dbReference>
<dbReference type="Pfam" id="PF02044">
    <property type="entry name" value="Bombesin"/>
    <property type="match status" value="1"/>
</dbReference>
<dbReference type="PROSITE" id="PS00257">
    <property type="entry name" value="BOMBESIN"/>
    <property type="match status" value="1"/>
</dbReference>